<sequence>MIPDVSQALAWLEKHPQALKGIQRGLERETLRVNADGTLATTGHPEALGSALTHKWITTDFAEALLEFITPVDGDIEHMLTFMRDLHRYTARNMGDERMWPLSMPCYIAEGQDIELAQYGTSNTGRFKTLYREGLKNRYGALMQTISGVHYNFSLPMAFWQAKCGDISGADAKEKISAGYFRVIRNYYRFGWVIPYLFGASPAICSSFLQGKPTSLPFEKTECGMYYLPYATSLRLSDLGYTNKSQSNLGITFNDLYEYVAGLKQAIKTPSEEYAKIGIEKDGKRLQINSNVLQIENELYAPIRPKRVTRSGESPSDALLRGGIEYIEVRSLDINPFSPIGVDEQQVRFLDLFMVWCALADAPEMSSSELACTRVNWNRVILEGRKPGLTLGIGCETAQFPLPQVGKDLFRDLKRVAQTLDSINGGEAYQKVCDELVACFDNPDLTFSARILRSMIDTGIGGTGKAFAEAYRNLLREEPLEILREEDFVAEREASERRQQEMEAADTEPFAVWLEKHA</sequence>
<comment type="catalytic activity">
    <reaction evidence="1">
        <text>L-cysteine + L-glutamate + ATP = gamma-L-glutamyl-L-cysteine + ADP + phosphate + H(+)</text>
        <dbReference type="Rhea" id="RHEA:13285"/>
        <dbReference type="ChEBI" id="CHEBI:15378"/>
        <dbReference type="ChEBI" id="CHEBI:29985"/>
        <dbReference type="ChEBI" id="CHEBI:30616"/>
        <dbReference type="ChEBI" id="CHEBI:35235"/>
        <dbReference type="ChEBI" id="CHEBI:43474"/>
        <dbReference type="ChEBI" id="CHEBI:58173"/>
        <dbReference type="ChEBI" id="CHEBI:456216"/>
        <dbReference type="EC" id="6.3.2.2"/>
    </reaction>
</comment>
<comment type="pathway">
    <text evidence="1">Sulfur metabolism; glutathione biosynthesis; glutathione from L-cysteine and L-glutamate: step 1/2.</text>
</comment>
<comment type="similarity">
    <text evidence="1">Belongs to the glutamate--cysteine ligase type 1 family. Type 1 subfamily.</text>
</comment>
<evidence type="ECO:0000255" key="1">
    <source>
        <dbReference type="HAMAP-Rule" id="MF_00578"/>
    </source>
</evidence>
<feature type="chain" id="PRO_1000129593" description="Glutamate--cysteine ligase">
    <location>
        <begin position="1"/>
        <end position="518"/>
    </location>
</feature>
<dbReference type="EC" id="6.3.2.2" evidence="1"/>
<dbReference type="EMBL" id="AP009240">
    <property type="protein sequence ID" value="BAG78465.1"/>
    <property type="molecule type" value="Genomic_DNA"/>
</dbReference>
<dbReference type="RefSeq" id="WP_000611804.1">
    <property type="nucleotide sequence ID" value="NC_011415.1"/>
</dbReference>
<dbReference type="SMR" id="B6I679"/>
<dbReference type="KEGG" id="ecy:ECSE_2941"/>
<dbReference type="HOGENOM" id="CLU_020728_3_0_6"/>
<dbReference type="UniPathway" id="UPA00142">
    <property type="reaction ID" value="UER00209"/>
</dbReference>
<dbReference type="Proteomes" id="UP000008199">
    <property type="component" value="Chromosome"/>
</dbReference>
<dbReference type="GO" id="GO:0005829">
    <property type="term" value="C:cytosol"/>
    <property type="evidence" value="ECO:0007669"/>
    <property type="project" value="TreeGrafter"/>
</dbReference>
<dbReference type="GO" id="GO:0005524">
    <property type="term" value="F:ATP binding"/>
    <property type="evidence" value="ECO:0007669"/>
    <property type="project" value="UniProtKB-KW"/>
</dbReference>
<dbReference type="GO" id="GO:0004357">
    <property type="term" value="F:glutamate-cysteine ligase activity"/>
    <property type="evidence" value="ECO:0007669"/>
    <property type="project" value="UniProtKB-UniRule"/>
</dbReference>
<dbReference type="GO" id="GO:0046872">
    <property type="term" value="F:metal ion binding"/>
    <property type="evidence" value="ECO:0007669"/>
    <property type="project" value="TreeGrafter"/>
</dbReference>
<dbReference type="GO" id="GO:0006750">
    <property type="term" value="P:glutathione biosynthetic process"/>
    <property type="evidence" value="ECO:0007669"/>
    <property type="project" value="UniProtKB-UniRule"/>
</dbReference>
<dbReference type="FunFam" id="3.30.590.20:FF:000001">
    <property type="entry name" value="Glutamate--cysteine ligase"/>
    <property type="match status" value="1"/>
</dbReference>
<dbReference type="Gene3D" id="3.30.590.20">
    <property type="match status" value="1"/>
</dbReference>
<dbReference type="HAMAP" id="MF_00578">
    <property type="entry name" value="Glu_cys_ligase"/>
    <property type="match status" value="1"/>
</dbReference>
<dbReference type="InterPro" id="IPR014746">
    <property type="entry name" value="Gln_synth/guanido_kin_cat_dom"/>
</dbReference>
<dbReference type="InterPro" id="IPR007370">
    <property type="entry name" value="Glu_cys_ligase"/>
</dbReference>
<dbReference type="InterPro" id="IPR006334">
    <property type="entry name" value="Glut_cys_ligase"/>
</dbReference>
<dbReference type="NCBIfam" id="TIGR01434">
    <property type="entry name" value="glu_cys_ligase"/>
    <property type="match status" value="1"/>
</dbReference>
<dbReference type="PANTHER" id="PTHR38761">
    <property type="entry name" value="GLUTAMATE--CYSTEINE LIGASE"/>
    <property type="match status" value="1"/>
</dbReference>
<dbReference type="PANTHER" id="PTHR38761:SF1">
    <property type="entry name" value="GLUTAMATE--CYSTEINE LIGASE"/>
    <property type="match status" value="1"/>
</dbReference>
<dbReference type="Pfam" id="PF04262">
    <property type="entry name" value="Glu_cys_ligase"/>
    <property type="match status" value="1"/>
</dbReference>
<dbReference type="SUPFAM" id="SSF55931">
    <property type="entry name" value="Glutamine synthetase/guanido kinase"/>
    <property type="match status" value="1"/>
</dbReference>
<reference key="1">
    <citation type="journal article" date="2008" name="DNA Res.">
        <title>Complete genome sequence and comparative analysis of the wild-type commensal Escherichia coli strain SE11 isolated from a healthy adult.</title>
        <authorList>
            <person name="Oshima K."/>
            <person name="Toh H."/>
            <person name="Ogura Y."/>
            <person name="Sasamoto H."/>
            <person name="Morita H."/>
            <person name="Park S.-H."/>
            <person name="Ooka T."/>
            <person name="Iyoda S."/>
            <person name="Taylor T.D."/>
            <person name="Hayashi T."/>
            <person name="Itoh K."/>
            <person name="Hattori M."/>
        </authorList>
    </citation>
    <scope>NUCLEOTIDE SEQUENCE [LARGE SCALE GENOMIC DNA]</scope>
    <source>
        <strain>SE11</strain>
    </source>
</reference>
<proteinExistence type="inferred from homology"/>
<protein>
    <recommendedName>
        <fullName evidence="1">Glutamate--cysteine ligase</fullName>
        <ecNumber evidence="1">6.3.2.2</ecNumber>
    </recommendedName>
    <alternativeName>
        <fullName evidence="1">Gamma-ECS</fullName>
        <shortName evidence="1">GCS</shortName>
    </alternativeName>
    <alternativeName>
        <fullName evidence="1">Gamma-glutamylcysteine synthetase</fullName>
    </alternativeName>
</protein>
<keyword id="KW-0067">ATP-binding</keyword>
<keyword id="KW-0317">Glutathione biosynthesis</keyword>
<keyword id="KW-0436">Ligase</keyword>
<keyword id="KW-0547">Nucleotide-binding</keyword>
<name>GSH1_ECOSE</name>
<organism>
    <name type="scientific">Escherichia coli (strain SE11)</name>
    <dbReference type="NCBI Taxonomy" id="409438"/>
    <lineage>
        <taxon>Bacteria</taxon>
        <taxon>Pseudomonadati</taxon>
        <taxon>Pseudomonadota</taxon>
        <taxon>Gammaproteobacteria</taxon>
        <taxon>Enterobacterales</taxon>
        <taxon>Enterobacteriaceae</taxon>
        <taxon>Escherichia</taxon>
    </lineage>
</organism>
<accession>B6I679</accession>
<gene>
    <name evidence="1" type="primary">gshA</name>
    <name type="ordered locus">ECSE_2941</name>
</gene>